<name>RL26_HUMAN</name>
<evidence type="ECO:0000256" key="1">
    <source>
        <dbReference type="SAM" id="MobiDB-lite"/>
    </source>
</evidence>
<evidence type="ECO:0000269" key="2">
    <source>
    </source>
</evidence>
<evidence type="ECO:0000269" key="3">
    <source>
    </source>
</evidence>
<evidence type="ECO:0000269" key="4">
    <source>
    </source>
</evidence>
<evidence type="ECO:0000269" key="5">
    <source>
    </source>
</evidence>
<evidence type="ECO:0000269" key="6">
    <source>
    </source>
</evidence>
<evidence type="ECO:0000303" key="7">
    <source>
    </source>
</evidence>
<evidence type="ECO:0000305" key="8"/>
<evidence type="ECO:0000305" key="9">
    <source>
    </source>
</evidence>
<evidence type="ECO:0007744" key="10">
    <source>
        <dbReference type="PDB" id="6LQM"/>
    </source>
</evidence>
<evidence type="ECO:0007744" key="11">
    <source>
        <dbReference type="PDB" id="6LSR"/>
    </source>
</evidence>
<evidence type="ECO:0007744" key="12">
    <source>
        <dbReference type="PDB" id="6LSS"/>
    </source>
</evidence>
<evidence type="ECO:0007744" key="13">
    <source>
        <dbReference type="PDB" id="6LU8"/>
    </source>
</evidence>
<evidence type="ECO:0007744" key="14">
    <source>
    </source>
</evidence>
<evidence type="ECO:0007744" key="15">
    <source>
    </source>
</evidence>
<evidence type="ECO:0007744" key="16">
    <source>
    </source>
</evidence>
<evidence type="ECO:0007744" key="17">
    <source>
    </source>
</evidence>
<evidence type="ECO:0007744" key="18">
    <source>
    </source>
</evidence>
<reference key="1">
    <citation type="journal article" date="1993" name="Nucleic Acids Res.">
        <title>Sequence of a cDNA encoding human ribosomal protein L26 and of a cDNA probably encoding human ribosomal protein L6.</title>
        <authorList>
            <person name="Zaman G.J.R."/>
        </authorList>
    </citation>
    <scope>NUCLEOTIDE SEQUENCE [MRNA]</scope>
</reference>
<reference key="2">
    <citation type="submission" date="1993-04" db="EMBL/GenBank/DDBJ databases">
        <title>Characterization of the human homologue to rat ribosomal protein L26 from HL60 cells.</title>
        <authorList>
            <person name="Butterfield L.H."/>
            <person name="Stephen K."/>
            <person name="Snyder C."/>
            <person name="Winston S."/>
        </authorList>
    </citation>
    <scope>NUCLEOTIDE SEQUENCE [GENOMIC DNA]</scope>
</reference>
<reference key="3">
    <citation type="journal article" date="2002" name="Genome Res.">
        <title>The human ribosomal protein genes: sequencing and comparative analysis of 73 genes.</title>
        <authorList>
            <person name="Yoshihama M."/>
            <person name="Uechi T."/>
            <person name="Asakawa S."/>
            <person name="Kawasaki K."/>
            <person name="Kato S."/>
            <person name="Higa S."/>
            <person name="Maeda N."/>
            <person name="Minoshima S."/>
            <person name="Tanaka T."/>
            <person name="Shimizu N."/>
            <person name="Kenmochi N."/>
        </authorList>
    </citation>
    <scope>NUCLEOTIDE SEQUENCE [GENOMIC DNA]</scope>
</reference>
<reference key="4">
    <citation type="journal article" date="2004" name="Nat. Genet.">
        <title>Complete sequencing and characterization of 21,243 full-length human cDNAs.</title>
        <authorList>
            <person name="Ota T."/>
            <person name="Suzuki Y."/>
            <person name="Nishikawa T."/>
            <person name="Otsuki T."/>
            <person name="Sugiyama T."/>
            <person name="Irie R."/>
            <person name="Wakamatsu A."/>
            <person name="Hayashi K."/>
            <person name="Sato H."/>
            <person name="Nagai K."/>
            <person name="Kimura K."/>
            <person name="Makita H."/>
            <person name="Sekine M."/>
            <person name="Obayashi M."/>
            <person name="Nishi T."/>
            <person name="Shibahara T."/>
            <person name="Tanaka T."/>
            <person name="Ishii S."/>
            <person name="Yamamoto J."/>
            <person name="Saito K."/>
            <person name="Kawai Y."/>
            <person name="Isono Y."/>
            <person name="Nakamura Y."/>
            <person name="Nagahari K."/>
            <person name="Murakami K."/>
            <person name="Yasuda T."/>
            <person name="Iwayanagi T."/>
            <person name="Wagatsuma M."/>
            <person name="Shiratori A."/>
            <person name="Sudo H."/>
            <person name="Hosoiri T."/>
            <person name="Kaku Y."/>
            <person name="Kodaira H."/>
            <person name="Kondo H."/>
            <person name="Sugawara M."/>
            <person name="Takahashi M."/>
            <person name="Kanda K."/>
            <person name="Yokoi T."/>
            <person name="Furuya T."/>
            <person name="Kikkawa E."/>
            <person name="Omura Y."/>
            <person name="Abe K."/>
            <person name="Kamihara K."/>
            <person name="Katsuta N."/>
            <person name="Sato K."/>
            <person name="Tanikawa M."/>
            <person name="Yamazaki M."/>
            <person name="Ninomiya K."/>
            <person name="Ishibashi T."/>
            <person name="Yamashita H."/>
            <person name="Murakawa K."/>
            <person name="Fujimori K."/>
            <person name="Tanai H."/>
            <person name="Kimata M."/>
            <person name="Watanabe M."/>
            <person name="Hiraoka S."/>
            <person name="Chiba Y."/>
            <person name="Ishida S."/>
            <person name="Ono Y."/>
            <person name="Takiguchi S."/>
            <person name="Watanabe S."/>
            <person name="Yosida M."/>
            <person name="Hotuta T."/>
            <person name="Kusano J."/>
            <person name="Kanehori K."/>
            <person name="Takahashi-Fujii A."/>
            <person name="Hara H."/>
            <person name="Tanase T.-O."/>
            <person name="Nomura Y."/>
            <person name="Togiya S."/>
            <person name="Komai F."/>
            <person name="Hara R."/>
            <person name="Takeuchi K."/>
            <person name="Arita M."/>
            <person name="Imose N."/>
            <person name="Musashino K."/>
            <person name="Yuuki H."/>
            <person name="Oshima A."/>
            <person name="Sasaki N."/>
            <person name="Aotsuka S."/>
            <person name="Yoshikawa Y."/>
            <person name="Matsunawa H."/>
            <person name="Ichihara T."/>
            <person name="Shiohata N."/>
            <person name="Sano S."/>
            <person name="Moriya S."/>
            <person name="Momiyama H."/>
            <person name="Satoh N."/>
            <person name="Takami S."/>
            <person name="Terashima Y."/>
            <person name="Suzuki O."/>
            <person name="Nakagawa S."/>
            <person name="Senoh A."/>
            <person name="Mizoguchi H."/>
            <person name="Goto Y."/>
            <person name="Shimizu F."/>
            <person name="Wakebe H."/>
            <person name="Hishigaki H."/>
            <person name="Watanabe T."/>
            <person name="Sugiyama A."/>
            <person name="Takemoto M."/>
            <person name="Kawakami B."/>
            <person name="Yamazaki M."/>
            <person name="Watanabe K."/>
            <person name="Kumagai A."/>
            <person name="Itakura S."/>
            <person name="Fukuzumi Y."/>
            <person name="Fujimori Y."/>
            <person name="Komiyama M."/>
            <person name="Tashiro H."/>
            <person name="Tanigami A."/>
            <person name="Fujiwara T."/>
            <person name="Ono T."/>
            <person name="Yamada K."/>
            <person name="Fujii Y."/>
            <person name="Ozaki K."/>
            <person name="Hirao M."/>
            <person name="Ohmori Y."/>
            <person name="Kawabata A."/>
            <person name="Hikiji T."/>
            <person name="Kobatake N."/>
            <person name="Inagaki H."/>
            <person name="Ikema Y."/>
            <person name="Okamoto S."/>
            <person name="Okitani R."/>
            <person name="Kawakami T."/>
            <person name="Noguchi S."/>
            <person name="Itoh T."/>
            <person name="Shigeta K."/>
            <person name="Senba T."/>
            <person name="Matsumura K."/>
            <person name="Nakajima Y."/>
            <person name="Mizuno T."/>
            <person name="Morinaga M."/>
            <person name="Sasaki M."/>
            <person name="Togashi T."/>
            <person name="Oyama M."/>
            <person name="Hata H."/>
            <person name="Watanabe M."/>
            <person name="Komatsu T."/>
            <person name="Mizushima-Sugano J."/>
            <person name="Satoh T."/>
            <person name="Shirai Y."/>
            <person name="Takahashi Y."/>
            <person name="Nakagawa K."/>
            <person name="Okumura K."/>
            <person name="Nagase T."/>
            <person name="Nomura N."/>
            <person name="Kikuchi H."/>
            <person name="Masuho Y."/>
            <person name="Yamashita R."/>
            <person name="Nakai K."/>
            <person name="Yada T."/>
            <person name="Nakamura Y."/>
            <person name="Ohara O."/>
            <person name="Isogai T."/>
            <person name="Sugano S."/>
        </authorList>
    </citation>
    <scope>NUCLEOTIDE SEQUENCE [LARGE SCALE MRNA]</scope>
    <source>
        <tissue>Testis</tissue>
    </source>
</reference>
<reference key="5">
    <citation type="submission" date="2005-09" db="EMBL/GenBank/DDBJ databases">
        <authorList>
            <person name="Mural R.J."/>
            <person name="Istrail S."/>
            <person name="Sutton G.G."/>
            <person name="Florea L."/>
            <person name="Halpern A.L."/>
            <person name="Mobarry C.M."/>
            <person name="Lippert R."/>
            <person name="Walenz B."/>
            <person name="Shatkay H."/>
            <person name="Dew I."/>
            <person name="Miller J.R."/>
            <person name="Flanigan M.J."/>
            <person name="Edwards N.J."/>
            <person name="Bolanos R."/>
            <person name="Fasulo D."/>
            <person name="Halldorsson B.V."/>
            <person name="Hannenhalli S."/>
            <person name="Turner R."/>
            <person name="Yooseph S."/>
            <person name="Lu F."/>
            <person name="Nusskern D.R."/>
            <person name="Shue B.C."/>
            <person name="Zheng X.H."/>
            <person name="Zhong F."/>
            <person name="Delcher A.L."/>
            <person name="Huson D.H."/>
            <person name="Kravitz S.A."/>
            <person name="Mouchard L."/>
            <person name="Reinert K."/>
            <person name="Remington K.A."/>
            <person name="Clark A.G."/>
            <person name="Waterman M.S."/>
            <person name="Eichler E.E."/>
            <person name="Adams M.D."/>
            <person name="Hunkapiller M.W."/>
            <person name="Myers E.W."/>
            <person name="Venter J.C."/>
        </authorList>
    </citation>
    <scope>NUCLEOTIDE SEQUENCE [LARGE SCALE GENOMIC DNA]</scope>
</reference>
<reference key="6">
    <citation type="journal article" date="2004" name="Genome Res.">
        <title>The status, quality, and expansion of the NIH full-length cDNA project: the Mammalian Gene Collection (MGC).</title>
        <authorList>
            <consortium name="The MGC Project Team"/>
        </authorList>
    </citation>
    <scope>NUCLEOTIDE SEQUENCE [LARGE SCALE MRNA]</scope>
    <source>
        <tissue>Colon</tissue>
    </source>
</reference>
<reference key="7">
    <citation type="journal article" date="2008" name="Proc. Natl. Acad. Sci. U.S.A.">
        <title>A quantitative atlas of mitotic phosphorylation.</title>
        <authorList>
            <person name="Dephoure N."/>
            <person name="Zhou C."/>
            <person name="Villen J."/>
            <person name="Beausoleil S.A."/>
            <person name="Bakalarski C.E."/>
            <person name="Elledge S.J."/>
            <person name="Gygi S.P."/>
        </authorList>
    </citation>
    <scope>PHOSPHORYLATION [LARGE SCALE ANALYSIS] AT THR-139</scope>
    <scope>IDENTIFICATION BY MASS SPECTROMETRY [LARGE SCALE ANALYSIS]</scope>
    <source>
        <tissue>Cervix carcinoma</tissue>
    </source>
</reference>
<reference key="8">
    <citation type="journal article" date="2011" name="BMC Syst. Biol.">
        <title>Initial characterization of the human central proteome.</title>
        <authorList>
            <person name="Burkard T.R."/>
            <person name="Planyavsky M."/>
            <person name="Kaupe I."/>
            <person name="Breitwieser F.P."/>
            <person name="Buerckstuemmer T."/>
            <person name="Bennett K.L."/>
            <person name="Superti-Furga G."/>
            <person name="Colinge J."/>
        </authorList>
    </citation>
    <scope>IDENTIFICATION BY MASS SPECTROMETRY [LARGE SCALE ANALYSIS]</scope>
</reference>
<reference key="9">
    <citation type="journal article" date="2012" name="Hum. Mutat.">
        <title>Frameshift mutation in p53 regulator RPL26 is associated with multiple physical abnormalities and a specific pre-ribosomal RNA processing defect in diamond-blackfan anemia.</title>
        <authorList>
            <person name="Gazda H.T."/>
            <person name="Preti M."/>
            <person name="Sheen M.R."/>
            <person name="O'Donohue M.F."/>
            <person name="Vlachos A."/>
            <person name="Davies S.M."/>
            <person name="Kattamis A."/>
            <person name="Doherty L."/>
            <person name="Landowski M."/>
            <person name="Buros C."/>
            <person name="Ghazvinian R."/>
            <person name="Sieff C.A."/>
            <person name="Newburger P.E."/>
            <person name="Niewiadomska E."/>
            <person name="Matysiak M."/>
            <person name="Glader B."/>
            <person name="Atsidaftos E."/>
            <person name="Lipton J.M."/>
            <person name="Gleizes P.E."/>
            <person name="Beggs A.H."/>
        </authorList>
    </citation>
    <scope>INVOLVEMENT IN DBA11</scope>
</reference>
<reference key="10">
    <citation type="journal article" date="2014" name="Curr. Opin. Struct. Biol.">
        <title>A new system for naming ribosomal proteins.</title>
        <authorList>
            <person name="Ban N."/>
            <person name="Beckmann R."/>
            <person name="Cate J.H.D."/>
            <person name="Dinman J.D."/>
            <person name="Dragon F."/>
            <person name="Ellis S.R."/>
            <person name="Lafontaine D.L.J."/>
            <person name="Lindahl L."/>
            <person name="Liljas A."/>
            <person name="Lipton J.M."/>
            <person name="McAlear M.A."/>
            <person name="Moore P.B."/>
            <person name="Noller H.F."/>
            <person name="Ortega J."/>
            <person name="Panse V.G."/>
            <person name="Ramakrishnan V."/>
            <person name="Spahn C.M.T."/>
            <person name="Steitz T.A."/>
            <person name="Tchorzewski M."/>
            <person name="Tollervey D."/>
            <person name="Warren A.J."/>
            <person name="Williamson J.R."/>
            <person name="Wilson D."/>
            <person name="Yonath A."/>
            <person name="Yusupov M."/>
        </authorList>
    </citation>
    <scope>NOMENCLATURE</scope>
</reference>
<reference key="11">
    <citation type="journal article" date="2014" name="Nat. Struct. Mol. Biol.">
        <title>Uncovering global SUMOylation signaling networks in a site-specific manner.</title>
        <authorList>
            <person name="Hendriks I.A."/>
            <person name="D'Souza R.C."/>
            <person name="Yang B."/>
            <person name="Verlaan-de Vries M."/>
            <person name="Mann M."/>
            <person name="Vertegaal A.C."/>
        </authorList>
    </citation>
    <scope>SUMOYLATION [LARGE SCALE ANALYSIS] AT LYS-136</scope>
    <scope>IDENTIFICATION BY MASS SPECTROMETRY [LARGE SCALE ANALYSIS]</scope>
</reference>
<reference key="12">
    <citation type="journal article" date="2015" name="Cell Rep.">
        <title>SUMO-2 orchestrates chromatin modifiers in response to DNA damage.</title>
        <authorList>
            <person name="Hendriks I.A."/>
            <person name="Treffers L.W."/>
            <person name="Verlaan-de Vries M."/>
            <person name="Olsen J.V."/>
            <person name="Vertegaal A.C."/>
        </authorList>
    </citation>
    <scope>SUMOYLATION [LARGE SCALE ANALYSIS] AT LYS-136</scope>
    <scope>IDENTIFICATION BY MASS SPECTROMETRY [LARGE SCALE ANALYSIS]</scope>
</reference>
<reference key="13">
    <citation type="journal article" date="2015" name="Mol. Cell. Biol.">
        <title>The DHX33 RNA Helicase Promotes mRNA Translation Initiation.</title>
        <authorList>
            <person name="Zhang Y."/>
            <person name="You J."/>
            <person name="Wang X."/>
            <person name="Weber J."/>
        </authorList>
    </citation>
    <scope>INTERACTION WITH DHX33</scope>
</reference>
<reference key="14">
    <citation type="journal article" date="2015" name="Mol. Cell. Proteomics">
        <title>System-wide analysis of SUMOylation dynamics in response to replication stress reveals novel small ubiquitin-like modified target proteins and acceptor lysines relevant for genome stability.</title>
        <authorList>
            <person name="Xiao Z."/>
            <person name="Chang J.G."/>
            <person name="Hendriks I.A."/>
            <person name="Sigurdsson J.O."/>
            <person name="Olsen J.V."/>
            <person name="Vertegaal A.C."/>
        </authorList>
    </citation>
    <scope>SUMOYLATION [LARGE SCALE ANALYSIS] AT LYS-136</scope>
    <scope>IDENTIFICATION BY MASS SPECTROMETRY [LARGE SCALE ANALYSIS]</scope>
</reference>
<reference key="15">
    <citation type="journal article" date="2017" name="Nat. Struct. Mol. Biol.">
        <title>Site-specific mapping of the human SUMO proteome reveals co-modification with phosphorylation.</title>
        <authorList>
            <person name="Hendriks I.A."/>
            <person name="Lyon D."/>
            <person name="Young C."/>
            <person name="Jensen L.J."/>
            <person name="Vertegaal A.C."/>
            <person name="Nielsen M.L."/>
        </authorList>
    </citation>
    <scope>SUMOYLATION [LARGE SCALE ANALYSIS] AT LYS-136</scope>
    <scope>IDENTIFICATION BY MASS SPECTROMETRY [LARGE SCALE ANALYSIS]</scope>
</reference>
<reference key="16">
    <citation type="journal article" date="2020" name="Cell">
        <title>A genome-wide ER-phagy screen highlights key roles of mitochondrial metabolism and ER-Resident UFMylation.</title>
        <authorList>
            <person name="Liang J.R."/>
            <person name="Lingeman E."/>
            <person name="Luong T."/>
            <person name="Ahmed S."/>
            <person name="Muhar M."/>
            <person name="Nguyen T."/>
            <person name="Olzmann J.A."/>
            <person name="Corn J.E."/>
        </authorList>
    </citation>
    <scope>UFMYLATION</scope>
</reference>
<reference key="17">
    <citation type="journal article" date="2013" name="Nature">
        <title>Structures of the human and Drosophila 80S ribosome.</title>
        <authorList>
            <person name="Anger A.M."/>
            <person name="Armache J.P."/>
            <person name="Berninghausen O."/>
            <person name="Habeck M."/>
            <person name="Subklewe M."/>
            <person name="Wilson D.N."/>
            <person name="Beckmann R."/>
        </authorList>
    </citation>
    <scope>STRUCTURE BY ELECTRON MICROSCOPY (5.0 ANGSTROMS)</scope>
    <scope>FUNCTION</scope>
    <scope>SUBUNIT</scope>
    <scope>SUBCELLULAR LOCATION</scope>
</reference>
<reference evidence="10 11 12 13" key="18">
    <citation type="journal article" date="2020" name="Nat. Commun.">
        <title>Structural snapshots of human pre-60S ribosomal particles before and after nuclear export.</title>
        <authorList>
            <person name="Liang X."/>
            <person name="Zuo M.Q."/>
            <person name="Zhang Y."/>
            <person name="Li N."/>
            <person name="Ma C."/>
            <person name="Dong M.Q."/>
            <person name="Gao N."/>
        </authorList>
    </citation>
    <scope>STRUCTURE BY ELECTRON MICROSCOPY (3.09 ANGSTROMS)</scope>
    <scope>FUNCTION</scope>
    <scope>SUBUNIT</scope>
</reference>
<keyword id="KW-0002">3D-structure</keyword>
<keyword id="KW-0963">Cytoplasm</keyword>
<keyword id="KW-1024">Diamond-Blackfan anemia</keyword>
<keyword id="KW-1017">Isopeptide bond</keyword>
<keyword id="KW-0597">Phosphoprotein</keyword>
<keyword id="KW-1267">Proteomics identification</keyword>
<keyword id="KW-1185">Reference proteome</keyword>
<keyword id="KW-0687">Ribonucleoprotein</keyword>
<keyword id="KW-0689">Ribosomal protein</keyword>
<keyword id="KW-0832">Ubl conjugation</keyword>
<accession>P61254</accession>
<accession>B2R4F0</accession>
<accession>D3DTR8</accession>
<accession>Q02877</accession>
<accession>Q6IPY2</accession>
<protein>
    <recommendedName>
        <fullName evidence="7">Large ribosomal subunit protein uL24</fullName>
    </recommendedName>
    <alternativeName>
        <fullName>60S ribosomal protein L26</fullName>
    </alternativeName>
</protein>
<organism>
    <name type="scientific">Homo sapiens</name>
    <name type="common">Human</name>
    <dbReference type="NCBI Taxonomy" id="9606"/>
    <lineage>
        <taxon>Eukaryota</taxon>
        <taxon>Metazoa</taxon>
        <taxon>Chordata</taxon>
        <taxon>Craniata</taxon>
        <taxon>Vertebrata</taxon>
        <taxon>Euteleostomi</taxon>
        <taxon>Mammalia</taxon>
        <taxon>Eutheria</taxon>
        <taxon>Euarchontoglires</taxon>
        <taxon>Primates</taxon>
        <taxon>Haplorrhini</taxon>
        <taxon>Catarrhini</taxon>
        <taxon>Hominidae</taxon>
        <taxon>Homo</taxon>
    </lineage>
</organism>
<feature type="chain" id="PRO_0000130787" description="Large ribosomal subunit protein uL24">
    <location>
        <begin position="1"/>
        <end position="145"/>
    </location>
</feature>
<feature type="region of interest" description="Disordered" evidence="1">
    <location>
        <begin position="1"/>
        <end position="21"/>
    </location>
</feature>
<feature type="region of interest" description="Disordered" evidence="1">
    <location>
        <begin position="122"/>
        <end position="145"/>
    </location>
</feature>
<feature type="modified residue" description="Phosphothreonine" evidence="14">
    <location>
        <position position="139"/>
    </location>
</feature>
<feature type="cross-link" description="Glycyl lysine isopeptide (Lys-Gly) (interchain with G-Cter in SUMO2)" evidence="15 16 17 18">
    <location>
        <position position="136"/>
    </location>
</feature>
<feature type="sequence conflict" description="In Ref. 2; AAA60279." evidence="8" ref="2">
    <original>G</original>
    <variation>S</variation>
    <location>
        <position position="133"/>
    </location>
</feature>
<gene>
    <name type="primary">RPL26</name>
</gene>
<comment type="function">
    <text evidence="3 6 9">Component of the large ribosomal subunit (PubMed:23636399, PubMed:26100019, PubMed:32669547). The ribosome is a large ribonucleoprotein complex responsible for the synthesis of proteins in the cell (PubMed:23636399, PubMed:26100019, PubMed:32669547).</text>
</comment>
<comment type="subunit">
    <text evidence="3 4 6 9">Component of the large ribosomal subunit (PubMed:23636399, PubMed:26100019, PubMed:32669547). Interacts with DHX33 (PubMed:26100019).</text>
</comment>
<comment type="subcellular location">
    <subcellularLocation>
        <location evidence="3">Cytoplasm</location>
    </subcellularLocation>
</comment>
<comment type="PTM">
    <text evidence="5">Ufmylated by UFL1 in response to endoplasmic reticulum stress, promoting reticulophagy of endoplasmic reticulum sheets.</text>
</comment>
<comment type="disease" evidence="2">
    <disease id="DI-03608">
        <name>Diamond-Blackfan anemia 11</name>
        <acronym>DBA11</acronym>
        <description>A form of Diamond-Blackfan anemia, a congenital non-regenerative hypoplastic anemia that usually presents early in infancy. Diamond-Blackfan anemia is characterized by a moderate to severe macrocytic anemia, erythroblastopenia, and an increased risk of malignancy. 30 to 40% of Diamond-Blackfan anemia patients present with short stature and congenital anomalies, the most frequent being craniofacial (Pierre-Robin syndrome and cleft palate), thumb and urogenital anomalies.</description>
        <dbReference type="MIM" id="614900"/>
    </disease>
    <text>The disease is caused by variants affecting the gene represented in this entry.</text>
</comment>
<comment type="similarity">
    <text evidence="8">Belongs to the universal ribosomal protein uL24 family.</text>
</comment>
<comment type="online information" name="Atlas of Genetics and Cytogenetics in Oncology and Haematology">
    <link uri="https://atlasgeneticsoncology.org/gene/47470/RPL26"/>
</comment>
<dbReference type="EMBL" id="X69392">
    <property type="protein sequence ID" value="CAA49189.1"/>
    <property type="molecule type" value="mRNA"/>
</dbReference>
<dbReference type="EMBL" id="L07287">
    <property type="protein sequence ID" value="AAA60279.1"/>
    <property type="molecule type" value="Genomic_DNA"/>
</dbReference>
<dbReference type="EMBL" id="AB061829">
    <property type="protein sequence ID" value="BAB79467.1"/>
    <property type="molecule type" value="Genomic_DNA"/>
</dbReference>
<dbReference type="EMBL" id="AK311804">
    <property type="protein sequence ID" value="BAG34747.1"/>
    <property type="molecule type" value="mRNA"/>
</dbReference>
<dbReference type="EMBL" id="CH471108">
    <property type="protein sequence ID" value="EAW90053.1"/>
    <property type="molecule type" value="Genomic_DNA"/>
</dbReference>
<dbReference type="EMBL" id="CH471108">
    <property type="protein sequence ID" value="EAW90054.1"/>
    <property type="molecule type" value="Genomic_DNA"/>
</dbReference>
<dbReference type="EMBL" id="CH471108">
    <property type="protein sequence ID" value="EAW90057.1"/>
    <property type="molecule type" value="Genomic_DNA"/>
</dbReference>
<dbReference type="EMBL" id="BC071664">
    <property type="protein sequence ID" value="AAH71664.1"/>
    <property type="molecule type" value="mRNA"/>
</dbReference>
<dbReference type="CCDS" id="CCDS11142.1"/>
<dbReference type="PIR" id="S33713">
    <property type="entry name" value="S33713"/>
</dbReference>
<dbReference type="RefSeq" id="NP_000978.1">
    <property type="nucleotide sequence ID" value="NM_000987.5"/>
</dbReference>
<dbReference type="RefSeq" id="NP_001302459.1">
    <property type="nucleotide sequence ID" value="NM_001315530.2"/>
</dbReference>
<dbReference type="RefSeq" id="NP_001302460.1">
    <property type="nucleotide sequence ID" value="NM_001315531.2"/>
</dbReference>
<dbReference type="RefSeq" id="XP_054172844.1">
    <property type="nucleotide sequence ID" value="XM_054316869.1"/>
</dbReference>
<dbReference type="PDB" id="4UG0">
    <property type="method" value="EM"/>
    <property type="chains" value="LY=1-145"/>
</dbReference>
<dbReference type="PDB" id="4V6X">
    <property type="method" value="EM"/>
    <property type="resolution" value="5.00 A"/>
    <property type="chains" value="CY=1-145"/>
</dbReference>
<dbReference type="PDB" id="5AJ0">
    <property type="method" value="EM"/>
    <property type="resolution" value="3.50 A"/>
    <property type="chains" value="AY=1-145"/>
</dbReference>
<dbReference type="PDB" id="5LKS">
    <property type="method" value="EM"/>
    <property type="resolution" value="3.60 A"/>
    <property type="chains" value="LY=1-145"/>
</dbReference>
<dbReference type="PDB" id="5T2C">
    <property type="method" value="EM"/>
    <property type="resolution" value="3.60 A"/>
    <property type="chains" value="S=1-145"/>
</dbReference>
<dbReference type="PDB" id="6IP5">
    <property type="method" value="EM"/>
    <property type="resolution" value="3.90 A"/>
    <property type="chains" value="2S=1-145"/>
</dbReference>
<dbReference type="PDB" id="6IP6">
    <property type="method" value="EM"/>
    <property type="resolution" value="4.50 A"/>
    <property type="chains" value="2S=1-145"/>
</dbReference>
<dbReference type="PDB" id="6IP8">
    <property type="method" value="EM"/>
    <property type="resolution" value="3.90 A"/>
    <property type="chains" value="2S=1-145"/>
</dbReference>
<dbReference type="PDB" id="6LQM">
    <property type="method" value="EM"/>
    <property type="resolution" value="3.09 A"/>
    <property type="chains" value="h=1-145"/>
</dbReference>
<dbReference type="PDB" id="6LSR">
    <property type="method" value="EM"/>
    <property type="resolution" value="3.13 A"/>
    <property type="chains" value="h=1-145"/>
</dbReference>
<dbReference type="PDB" id="6LSS">
    <property type="method" value="EM"/>
    <property type="resolution" value="3.23 A"/>
    <property type="chains" value="h=1-145"/>
</dbReference>
<dbReference type="PDB" id="6LU8">
    <property type="method" value="EM"/>
    <property type="resolution" value="3.13 A"/>
    <property type="chains" value="h=1-145"/>
</dbReference>
<dbReference type="PDB" id="6OLE">
    <property type="method" value="EM"/>
    <property type="resolution" value="3.10 A"/>
    <property type="chains" value="Z=1-134"/>
</dbReference>
<dbReference type="PDB" id="6OLF">
    <property type="method" value="EM"/>
    <property type="resolution" value="3.90 A"/>
    <property type="chains" value="Z=1-134"/>
</dbReference>
<dbReference type="PDB" id="6OLG">
    <property type="method" value="EM"/>
    <property type="resolution" value="3.40 A"/>
    <property type="chains" value="AY=1-127"/>
</dbReference>
<dbReference type="PDB" id="6OLI">
    <property type="method" value="EM"/>
    <property type="resolution" value="3.50 A"/>
    <property type="chains" value="Z=1-134"/>
</dbReference>
<dbReference type="PDB" id="6OLZ">
    <property type="method" value="EM"/>
    <property type="resolution" value="3.90 A"/>
    <property type="chains" value="AY=1-127"/>
</dbReference>
<dbReference type="PDB" id="6OM0">
    <property type="method" value="EM"/>
    <property type="resolution" value="3.10 A"/>
    <property type="chains" value="Z=1-134"/>
</dbReference>
<dbReference type="PDB" id="6OM7">
    <property type="method" value="EM"/>
    <property type="resolution" value="3.70 A"/>
    <property type="chains" value="Z=1-134"/>
</dbReference>
<dbReference type="PDB" id="6QZP">
    <property type="method" value="EM"/>
    <property type="resolution" value="2.90 A"/>
    <property type="chains" value="LY=1-134"/>
</dbReference>
<dbReference type="PDB" id="6SXO">
    <property type="method" value="EM"/>
    <property type="resolution" value="3.30 A"/>
    <property type="chains" value="LY=1-145"/>
</dbReference>
<dbReference type="PDB" id="6W6L">
    <property type="method" value="EM"/>
    <property type="resolution" value="3.84 A"/>
    <property type="chains" value="Z=1-145"/>
</dbReference>
<dbReference type="PDB" id="6XA1">
    <property type="method" value="EM"/>
    <property type="resolution" value="2.80 A"/>
    <property type="chains" value="LY=1-134"/>
</dbReference>
<dbReference type="PDB" id="6Y0G">
    <property type="method" value="EM"/>
    <property type="resolution" value="3.20 A"/>
    <property type="chains" value="LY=1-145"/>
</dbReference>
<dbReference type="PDB" id="6Y2L">
    <property type="method" value="EM"/>
    <property type="resolution" value="3.00 A"/>
    <property type="chains" value="LY=1-145"/>
</dbReference>
<dbReference type="PDB" id="6Y57">
    <property type="method" value="EM"/>
    <property type="resolution" value="3.50 A"/>
    <property type="chains" value="LY=1-145"/>
</dbReference>
<dbReference type="PDB" id="6Y6X">
    <property type="method" value="EM"/>
    <property type="resolution" value="2.80 A"/>
    <property type="chains" value="LY=1-134"/>
</dbReference>
<dbReference type="PDB" id="6Z6L">
    <property type="method" value="EM"/>
    <property type="resolution" value="3.00 A"/>
    <property type="chains" value="LY=1-145"/>
</dbReference>
<dbReference type="PDB" id="6Z6M">
    <property type="method" value="EM"/>
    <property type="resolution" value="3.10 A"/>
    <property type="chains" value="LY=1-145"/>
</dbReference>
<dbReference type="PDB" id="6Z6N">
    <property type="method" value="EM"/>
    <property type="resolution" value="2.90 A"/>
    <property type="chains" value="LY=1-145"/>
</dbReference>
<dbReference type="PDB" id="6ZM7">
    <property type="method" value="EM"/>
    <property type="resolution" value="2.70 A"/>
    <property type="chains" value="LY=1-145"/>
</dbReference>
<dbReference type="PDB" id="6ZME">
    <property type="method" value="EM"/>
    <property type="resolution" value="3.00 A"/>
    <property type="chains" value="LY=1-145"/>
</dbReference>
<dbReference type="PDB" id="6ZMI">
    <property type="method" value="EM"/>
    <property type="resolution" value="2.60 A"/>
    <property type="chains" value="LY=1-145"/>
</dbReference>
<dbReference type="PDB" id="6ZMO">
    <property type="method" value="EM"/>
    <property type="resolution" value="3.10 A"/>
    <property type="chains" value="LY=1-145"/>
</dbReference>
<dbReference type="PDB" id="7BHP">
    <property type="method" value="EM"/>
    <property type="resolution" value="3.30 A"/>
    <property type="chains" value="LY=1-145"/>
</dbReference>
<dbReference type="PDB" id="7F5S">
    <property type="method" value="EM"/>
    <property type="resolution" value="2.72 A"/>
    <property type="chains" value="LY=1-145"/>
</dbReference>
<dbReference type="PDB" id="7OW7">
    <property type="method" value="EM"/>
    <property type="resolution" value="2.20 A"/>
    <property type="chains" value="S=1-145"/>
</dbReference>
<dbReference type="PDB" id="7XNX">
    <property type="method" value="EM"/>
    <property type="resolution" value="2.70 A"/>
    <property type="chains" value="LY=1-145"/>
</dbReference>
<dbReference type="PDB" id="7XNY">
    <property type="method" value="EM"/>
    <property type="resolution" value="2.50 A"/>
    <property type="chains" value="LY=1-145"/>
</dbReference>
<dbReference type="PDB" id="8A3D">
    <property type="method" value="EM"/>
    <property type="resolution" value="1.67 A"/>
    <property type="chains" value="S=1-145"/>
</dbReference>
<dbReference type="PDB" id="8FKP">
    <property type="method" value="EM"/>
    <property type="resolution" value="2.85 A"/>
    <property type="chains" value="LI=1-145"/>
</dbReference>
<dbReference type="PDB" id="8FKQ">
    <property type="method" value="EM"/>
    <property type="resolution" value="2.76 A"/>
    <property type="chains" value="LI=1-145"/>
</dbReference>
<dbReference type="PDB" id="8FKR">
    <property type="method" value="EM"/>
    <property type="resolution" value="2.89 A"/>
    <property type="chains" value="LI=1-145"/>
</dbReference>
<dbReference type="PDB" id="8FKS">
    <property type="method" value="EM"/>
    <property type="resolution" value="2.88 A"/>
    <property type="chains" value="LI=1-145"/>
</dbReference>
<dbReference type="PDB" id="8FKT">
    <property type="method" value="EM"/>
    <property type="resolution" value="2.81 A"/>
    <property type="chains" value="LI=1-145"/>
</dbReference>
<dbReference type="PDB" id="8FKU">
    <property type="method" value="EM"/>
    <property type="resolution" value="2.82 A"/>
    <property type="chains" value="LI=1-145"/>
</dbReference>
<dbReference type="PDB" id="8FKV">
    <property type="method" value="EM"/>
    <property type="resolution" value="2.47 A"/>
    <property type="chains" value="LI=1-145"/>
</dbReference>
<dbReference type="PDB" id="8FKW">
    <property type="method" value="EM"/>
    <property type="resolution" value="2.50 A"/>
    <property type="chains" value="LI=1-145"/>
</dbReference>
<dbReference type="PDB" id="8FKX">
    <property type="method" value="EM"/>
    <property type="resolution" value="2.59 A"/>
    <property type="chains" value="LI=1-145"/>
</dbReference>
<dbReference type="PDB" id="8FKY">
    <property type="method" value="EM"/>
    <property type="resolution" value="2.67 A"/>
    <property type="chains" value="LI=1-145"/>
</dbReference>
<dbReference type="PDB" id="8FKZ">
    <property type="method" value="EM"/>
    <property type="resolution" value="3.04 A"/>
    <property type="chains" value="LI=1-145"/>
</dbReference>
<dbReference type="PDB" id="8FL2">
    <property type="method" value="EM"/>
    <property type="resolution" value="2.67 A"/>
    <property type="chains" value="LI=1-145"/>
</dbReference>
<dbReference type="PDB" id="8FL3">
    <property type="method" value="EM"/>
    <property type="resolution" value="2.53 A"/>
    <property type="chains" value="LI=1-145"/>
</dbReference>
<dbReference type="PDB" id="8FL4">
    <property type="method" value="EM"/>
    <property type="resolution" value="2.89 A"/>
    <property type="chains" value="LI=1-145"/>
</dbReference>
<dbReference type="PDB" id="8FL6">
    <property type="method" value="EM"/>
    <property type="resolution" value="2.62 A"/>
    <property type="chains" value="LI=1-145"/>
</dbReference>
<dbReference type="PDB" id="8FL7">
    <property type="method" value="EM"/>
    <property type="resolution" value="2.55 A"/>
    <property type="chains" value="LI=1-145"/>
</dbReference>
<dbReference type="PDB" id="8FL9">
    <property type="method" value="EM"/>
    <property type="resolution" value="2.75 A"/>
    <property type="chains" value="LI=1-145"/>
</dbReference>
<dbReference type="PDB" id="8FLA">
    <property type="method" value="EM"/>
    <property type="resolution" value="2.63 A"/>
    <property type="chains" value="LI=1-145"/>
</dbReference>
<dbReference type="PDB" id="8FLB">
    <property type="method" value="EM"/>
    <property type="resolution" value="2.55 A"/>
    <property type="chains" value="LI=1-145"/>
</dbReference>
<dbReference type="PDB" id="8FLC">
    <property type="method" value="EM"/>
    <property type="resolution" value="2.76 A"/>
    <property type="chains" value="LI=1-145"/>
</dbReference>
<dbReference type="PDB" id="8FLD">
    <property type="method" value="EM"/>
    <property type="resolution" value="2.58 A"/>
    <property type="chains" value="LI=1-145"/>
</dbReference>
<dbReference type="PDB" id="8FLE">
    <property type="method" value="EM"/>
    <property type="resolution" value="2.48 A"/>
    <property type="chains" value="LI=1-145"/>
</dbReference>
<dbReference type="PDB" id="8FLF">
    <property type="method" value="EM"/>
    <property type="resolution" value="2.65 A"/>
    <property type="chains" value="LI=1-145"/>
</dbReference>
<dbReference type="PDB" id="8G5Y">
    <property type="method" value="EM"/>
    <property type="resolution" value="2.29 A"/>
    <property type="chains" value="LY=1-145"/>
</dbReference>
<dbReference type="PDB" id="8G5Z">
    <property type="method" value="EM"/>
    <property type="resolution" value="2.64 A"/>
    <property type="chains" value="LY=1-134"/>
</dbReference>
<dbReference type="PDB" id="8G60">
    <property type="method" value="EM"/>
    <property type="resolution" value="2.54 A"/>
    <property type="chains" value="LY=1-145"/>
</dbReference>
<dbReference type="PDB" id="8G61">
    <property type="method" value="EM"/>
    <property type="resolution" value="2.94 A"/>
    <property type="chains" value="LY=1-145"/>
</dbReference>
<dbReference type="PDB" id="8G6J">
    <property type="method" value="EM"/>
    <property type="resolution" value="2.80 A"/>
    <property type="chains" value="LY=1-145"/>
</dbReference>
<dbReference type="PDB" id="8GLP">
    <property type="method" value="EM"/>
    <property type="resolution" value="1.67 A"/>
    <property type="chains" value="LY=1-145"/>
</dbReference>
<dbReference type="PDB" id="8IDT">
    <property type="method" value="EM"/>
    <property type="resolution" value="2.80 A"/>
    <property type="chains" value="h=1-145"/>
</dbReference>
<dbReference type="PDB" id="8IDY">
    <property type="method" value="EM"/>
    <property type="resolution" value="3.00 A"/>
    <property type="chains" value="h=1-145"/>
</dbReference>
<dbReference type="PDB" id="8IE3">
    <property type="method" value="EM"/>
    <property type="resolution" value="3.30 A"/>
    <property type="chains" value="h=1-145"/>
</dbReference>
<dbReference type="PDB" id="8IFD">
    <property type="method" value="EM"/>
    <property type="resolution" value="2.59 A"/>
    <property type="chains" value="2S=1-145"/>
</dbReference>
<dbReference type="PDB" id="8IFE">
    <property type="method" value="EM"/>
    <property type="resolution" value="2.57 A"/>
    <property type="chains" value="2S=1-145"/>
</dbReference>
<dbReference type="PDB" id="8INE">
    <property type="method" value="EM"/>
    <property type="resolution" value="3.20 A"/>
    <property type="chains" value="h=1-145"/>
</dbReference>
<dbReference type="PDB" id="8INF">
    <property type="method" value="EM"/>
    <property type="resolution" value="3.00 A"/>
    <property type="chains" value="h=1-145"/>
</dbReference>
<dbReference type="PDB" id="8INK">
    <property type="method" value="EM"/>
    <property type="resolution" value="3.20 A"/>
    <property type="chains" value="h=1-145"/>
</dbReference>
<dbReference type="PDB" id="8IPD">
    <property type="method" value="EM"/>
    <property type="resolution" value="3.20 A"/>
    <property type="chains" value="h=1-145"/>
</dbReference>
<dbReference type="PDB" id="8IPX">
    <property type="method" value="EM"/>
    <property type="resolution" value="4.30 A"/>
    <property type="chains" value="h=1-145"/>
</dbReference>
<dbReference type="PDB" id="8IPY">
    <property type="method" value="EM"/>
    <property type="resolution" value="3.20 A"/>
    <property type="chains" value="h=1-145"/>
</dbReference>
<dbReference type="PDB" id="8IR1">
    <property type="method" value="EM"/>
    <property type="resolution" value="3.30 A"/>
    <property type="chains" value="h=1-145"/>
</dbReference>
<dbReference type="PDB" id="8IR3">
    <property type="method" value="EM"/>
    <property type="resolution" value="3.50 A"/>
    <property type="chains" value="h=1-145"/>
</dbReference>
<dbReference type="PDB" id="8JDJ">
    <property type="method" value="EM"/>
    <property type="resolution" value="2.50 A"/>
    <property type="chains" value="d=1-145"/>
</dbReference>
<dbReference type="PDB" id="8JDK">
    <property type="method" value="EM"/>
    <property type="resolution" value="2.26 A"/>
    <property type="chains" value="d=1-145"/>
</dbReference>
<dbReference type="PDB" id="8JDL">
    <property type="method" value="EM"/>
    <property type="resolution" value="2.42 A"/>
    <property type="chains" value="d=1-145"/>
</dbReference>
<dbReference type="PDB" id="8JDM">
    <property type="method" value="EM"/>
    <property type="resolution" value="2.67 A"/>
    <property type="chains" value="d=1-145"/>
</dbReference>
<dbReference type="PDB" id="8K2C">
    <property type="method" value="EM"/>
    <property type="resolution" value="2.40 A"/>
    <property type="chains" value="LY=1-145"/>
</dbReference>
<dbReference type="PDB" id="8OHD">
    <property type="method" value="EM"/>
    <property type="resolution" value="3.10 A"/>
    <property type="chains" value="LY=1-145"/>
</dbReference>
<dbReference type="PDB" id="8OJ0">
    <property type="method" value="EM"/>
    <property type="resolution" value="3.30 A"/>
    <property type="chains" value="LY=1-145"/>
</dbReference>
<dbReference type="PDB" id="8OJ5">
    <property type="method" value="EM"/>
    <property type="resolution" value="2.90 A"/>
    <property type="chains" value="LY=1-145"/>
</dbReference>
<dbReference type="PDB" id="8OJ8">
    <property type="method" value="EM"/>
    <property type="resolution" value="3.30 A"/>
    <property type="chains" value="LY=1-145"/>
</dbReference>
<dbReference type="PDB" id="8ONY">
    <property type="method" value="EM"/>
    <property type="resolution" value="2.92 A"/>
    <property type="chains" value="LY=1-145"/>
</dbReference>
<dbReference type="PDB" id="8QFD">
    <property type="method" value="EM"/>
    <property type="resolution" value="2.20 A"/>
    <property type="chains" value="Y=1-145"/>
</dbReference>
<dbReference type="PDB" id="8QOI">
    <property type="method" value="EM"/>
    <property type="resolution" value="1.90 A"/>
    <property type="chains" value="LY=1-145"/>
</dbReference>
<dbReference type="PDB" id="8QYX">
    <property type="method" value="EM"/>
    <property type="resolution" value="1.78 A"/>
    <property type="chains" value="S1=1-145"/>
</dbReference>
<dbReference type="PDB" id="8RL2">
    <property type="method" value="EM"/>
    <property type="resolution" value="2.84 A"/>
    <property type="chains" value="LY=1-145"/>
</dbReference>
<dbReference type="PDB" id="8UKB">
    <property type="method" value="EM"/>
    <property type="resolution" value="3.05 A"/>
    <property type="chains" value="LY=1-134"/>
</dbReference>
<dbReference type="PDB" id="8XSX">
    <property type="method" value="EM"/>
    <property type="resolution" value="2.40 A"/>
    <property type="chains" value="LY=1-145"/>
</dbReference>
<dbReference type="PDB" id="8XSY">
    <property type="method" value="EM"/>
    <property type="resolution" value="3.00 A"/>
    <property type="chains" value="LY=1-145"/>
</dbReference>
<dbReference type="PDB" id="8XSZ">
    <property type="method" value="EM"/>
    <property type="resolution" value="3.20 A"/>
    <property type="chains" value="LY=1-145"/>
</dbReference>
<dbReference type="PDB" id="8Y0W">
    <property type="method" value="EM"/>
    <property type="resolution" value="3.40 A"/>
    <property type="chains" value="LY=1-145"/>
</dbReference>
<dbReference type="PDB" id="8Y0X">
    <property type="method" value="EM"/>
    <property type="resolution" value="3.30 A"/>
    <property type="chains" value="LY=1-145"/>
</dbReference>
<dbReference type="PDB" id="8YOO">
    <property type="method" value="EM"/>
    <property type="resolution" value="2.00 A"/>
    <property type="chains" value="LY=1-145"/>
</dbReference>
<dbReference type="PDB" id="8YOP">
    <property type="method" value="EM"/>
    <property type="resolution" value="2.20 A"/>
    <property type="chains" value="LY=1-145"/>
</dbReference>
<dbReference type="PDB" id="9C3H">
    <property type="method" value="EM"/>
    <property type="resolution" value="2.00 A"/>
    <property type="chains" value="LE=1-145"/>
</dbReference>
<dbReference type="PDB" id="9FPZ">
    <property type="method" value="EM"/>
    <property type="resolution" value="2.69 A"/>
    <property type="chains" value="LY=1-145"/>
</dbReference>
<dbReference type="PDB" id="9G8M">
    <property type="method" value="EM"/>
    <property type="resolution" value="3.30 A"/>
    <property type="chains" value="LY=1-145"/>
</dbReference>
<dbReference type="PDB" id="9GMO">
    <property type="method" value="EM"/>
    <property type="resolution" value="2.59 A"/>
    <property type="chains" value="S=1-145"/>
</dbReference>
<dbReference type="PDBsum" id="4UG0"/>
<dbReference type="PDBsum" id="4V6X"/>
<dbReference type="PDBsum" id="5AJ0"/>
<dbReference type="PDBsum" id="5LKS"/>
<dbReference type="PDBsum" id="5T2C"/>
<dbReference type="PDBsum" id="6IP5"/>
<dbReference type="PDBsum" id="6IP6"/>
<dbReference type="PDBsum" id="6IP8"/>
<dbReference type="PDBsum" id="6LQM"/>
<dbReference type="PDBsum" id="6LSR"/>
<dbReference type="PDBsum" id="6LSS"/>
<dbReference type="PDBsum" id="6LU8"/>
<dbReference type="PDBsum" id="6OLE"/>
<dbReference type="PDBsum" id="6OLF"/>
<dbReference type="PDBsum" id="6OLG"/>
<dbReference type="PDBsum" id="6OLI"/>
<dbReference type="PDBsum" id="6OLZ"/>
<dbReference type="PDBsum" id="6OM0"/>
<dbReference type="PDBsum" id="6OM7"/>
<dbReference type="PDBsum" id="6QZP"/>
<dbReference type="PDBsum" id="6SXO"/>
<dbReference type="PDBsum" id="6W6L"/>
<dbReference type="PDBsum" id="6XA1"/>
<dbReference type="PDBsum" id="6Y0G"/>
<dbReference type="PDBsum" id="6Y2L"/>
<dbReference type="PDBsum" id="6Y57"/>
<dbReference type="PDBsum" id="6Y6X"/>
<dbReference type="PDBsum" id="6Z6L"/>
<dbReference type="PDBsum" id="6Z6M"/>
<dbReference type="PDBsum" id="6Z6N"/>
<dbReference type="PDBsum" id="6ZM7"/>
<dbReference type="PDBsum" id="6ZME"/>
<dbReference type="PDBsum" id="6ZMI"/>
<dbReference type="PDBsum" id="6ZMO"/>
<dbReference type="PDBsum" id="7BHP"/>
<dbReference type="PDBsum" id="7F5S"/>
<dbReference type="PDBsum" id="7OW7"/>
<dbReference type="PDBsum" id="7XNX"/>
<dbReference type="PDBsum" id="7XNY"/>
<dbReference type="PDBsum" id="8A3D"/>
<dbReference type="PDBsum" id="8FKP"/>
<dbReference type="PDBsum" id="8FKQ"/>
<dbReference type="PDBsum" id="8FKR"/>
<dbReference type="PDBsum" id="8FKS"/>
<dbReference type="PDBsum" id="8FKT"/>
<dbReference type="PDBsum" id="8FKU"/>
<dbReference type="PDBsum" id="8FKV"/>
<dbReference type="PDBsum" id="8FKW"/>
<dbReference type="PDBsum" id="8FKX"/>
<dbReference type="PDBsum" id="8FKY"/>
<dbReference type="PDBsum" id="8FKZ"/>
<dbReference type="PDBsum" id="8FL2"/>
<dbReference type="PDBsum" id="8FL3"/>
<dbReference type="PDBsum" id="8FL4"/>
<dbReference type="PDBsum" id="8FL6"/>
<dbReference type="PDBsum" id="8FL7"/>
<dbReference type="PDBsum" id="8FL9"/>
<dbReference type="PDBsum" id="8FLA"/>
<dbReference type="PDBsum" id="8FLB"/>
<dbReference type="PDBsum" id="8FLC"/>
<dbReference type="PDBsum" id="8FLD"/>
<dbReference type="PDBsum" id="8FLE"/>
<dbReference type="PDBsum" id="8FLF"/>
<dbReference type="PDBsum" id="8G5Y"/>
<dbReference type="PDBsum" id="8G5Z"/>
<dbReference type="PDBsum" id="8G60"/>
<dbReference type="PDBsum" id="8G61"/>
<dbReference type="PDBsum" id="8G6J"/>
<dbReference type="PDBsum" id="8GLP"/>
<dbReference type="PDBsum" id="8IDT"/>
<dbReference type="PDBsum" id="8IDY"/>
<dbReference type="PDBsum" id="8IE3"/>
<dbReference type="PDBsum" id="8IFD"/>
<dbReference type="PDBsum" id="8IFE"/>
<dbReference type="PDBsum" id="8INE"/>
<dbReference type="PDBsum" id="8INF"/>
<dbReference type="PDBsum" id="8INK"/>
<dbReference type="PDBsum" id="8IPD"/>
<dbReference type="PDBsum" id="8IPX"/>
<dbReference type="PDBsum" id="8IPY"/>
<dbReference type="PDBsum" id="8IR1"/>
<dbReference type="PDBsum" id="8IR3"/>
<dbReference type="PDBsum" id="8JDJ"/>
<dbReference type="PDBsum" id="8JDK"/>
<dbReference type="PDBsum" id="8JDL"/>
<dbReference type="PDBsum" id="8JDM"/>
<dbReference type="PDBsum" id="8K2C"/>
<dbReference type="PDBsum" id="8OHD"/>
<dbReference type="PDBsum" id="8OJ0"/>
<dbReference type="PDBsum" id="8OJ5"/>
<dbReference type="PDBsum" id="8OJ8"/>
<dbReference type="PDBsum" id="8ONY"/>
<dbReference type="PDBsum" id="8QFD"/>
<dbReference type="PDBsum" id="8QOI"/>
<dbReference type="PDBsum" id="8QYX"/>
<dbReference type="PDBsum" id="8RL2"/>
<dbReference type="PDBsum" id="8UKB"/>
<dbReference type="PDBsum" id="8XSX"/>
<dbReference type="PDBsum" id="8XSY"/>
<dbReference type="PDBsum" id="8XSZ"/>
<dbReference type="PDBsum" id="8Y0W"/>
<dbReference type="PDBsum" id="8Y0X"/>
<dbReference type="PDBsum" id="8YOO"/>
<dbReference type="PDBsum" id="8YOP"/>
<dbReference type="PDBsum" id="9C3H"/>
<dbReference type="PDBsum" id="9FPZ"/>
<dbReference type="PDBsum" id="9G8M"/>
<dbReference type="PDBsum" id="9GMO"/>
<dbReference type="EMDB" id="EMD-0948"/>
<dbReference type="EMDB" id="EMD-0963"/>
<dbReference type="EMDB" id="EMD-0964"/>
<dbReference type="EMDB" id="EMD-0978"/>
<dbReference type="EMDB" id="EMD-10344"/>
<dbReference type="EMDB" id="EMD-10668"/>
<dbReference type="EMDB" id="EMD-10674"/>
<dbReference type="EMDB" id="EMD-10690"/>
<dbReference type="EMDB" id="EMD-10709"/>
<dbReference type="EMDB" id="EMD-11098"/>
<dbReference type="EMDB" id="EMD-11099"/>
<dbReference type="EMDB" id="EMD-11100"/>
<dbReference type="EMDB" id="EMD-11288"/>
<dbReference type="EMDB" id="EMD-11289"/>
<dbReference type="EMDB" id="EMD-11292"/>
<dbReference type="EMDB" id="EMD-11299"/>
<dbReference type="EMDB" id="EMD-12189"/>
<dbReference type="EMDB" id="EMD-13094"/>
<dbReference type="EMDB" id="EMD-15113"/>
<dbReference type="EMDB" id="EMD-16880"/>
<dbReference type="EMDB" id="EMD-16902"/>
<dbReference type="EMDB" id="EMD-16905"/>
<dbReference type="EMDB" id="EMD-16908"/>
<dbReference type="EMDB" id="EMD-17002"/>
<dbReference type="EMDB" id="EMD-18382"/>
<dbReference type="EMDB" id="EMD-18539"/>
<dbReference type="EMDB" id="EMD-18765"/>
<dbReference type="EMDB" id="EMD-19330"/>
<dbReference type="EMDB" id="EMD-29252"/>
<dbReference type="EMDB" id="EMD-29253"/>
<dbReference type="EMDB" id="EMD-29254"/>
<dbReference type="EMDB" id="EMD-29255"/>
<dbReference type="EMDB" id="EMD-29256"/>
<dbReference type="EMDB" id="EMD-29257"/>
<dbReference type="EMDB" id="EMD-29258"/>
<dbReference type="EMDB" id="EMD-29259"/>
<dbReference type="EMDB" id="EMD-29260"/>
<dbReference type="EMDB" id="EMD-29261"/>
<dbReference type="EMDB" id="EMD-29262"/>
<dbReference type="EMDB" id="EMD-29265"/>
<dbReference type="EMDB" id="EMD-29266"/>
<dbReference type="EMDB" id="EMD-29267"/>
<dbReference type="EMDB" id="EMD-29268"/>
<dbReference type="EMDB" id="EMD-29269"/>
<dbReference type="EMDB" id="EMD-29271"/>
<dbReference type="EMDB" id="EMD-29272"/>
<dbReference type="EMDB" id="EMD-29273"/>
<dbReference type="EMDB" id="EMD-29274"/>
<dbReference type="EMDB" id="EMD-29275"/>
<dbReference type="EMDB" id="EMD-29276"/>
<dbReference type="EMDB" id="EMD-29277"/>
<dbReference type="EMDB" id="EMD-29757"/>
<dbReference type="EMDB" id="EMD-29758"/>
<dbReference type="EMDB" id="EMD-29759"/>
<dbReference type="EMDB" id="EMD-29760"/>
<dbReference type="EMDB" id="EMD-29771"/>
<dbReference type="EMDB" id="EMD-31465"/>
<dbReference type="EMDB" id="EMD-33329"/>
<dbReference type="EMDB" id="EMD-33330"/>
<dbReference type="EMDB" id="EMD-35370"/>
<dbReference type="EMDB" id="EMD-35371"/>
<dbReference type="EMDB" id="EMD-35375"/>
<dbReference type="EMDB" id="EMD-35413"/>
<dbReference type="EMDB" id="EMD-35414"/>
<dbReference type="EMDB" id="EMD-35596"/>
<dbReference type="EMDB" id="EMD-35597"/>
<dbReference type="EMDB" id="EMD-35599"/>
<dbReference type="EMDB" id="EMD-35639"/>
<dbReference type="EMDB" id="EMD-35649"/>
<dbReference type="EMDB" id="EMD-35651"/>
<dbReference type="EMDB" id="EMD-35672"/>
<dbReference type="EMDB" id="EMD-35673"/>
<dbReference type="EMDB" id="EMD-36178"/>
<dbReference type="EMDB" id="EMD-36179"/>
<dbReference type="EMDB" id="EMD-36180"/>
<dbReference type="EMDB" id="EMD-36181"/>
<dbReference type="EMDB" id="EMD-36838"/>
<dbReference type="EMDB" id="EMD-38629"/>
<dbReference type="EMDB" id="EMD-38630"/>
<dbReference type="EMDB" id="EMD-38631"/>
<dbReference type="EMDB" id="EMD-3883"/>
<dbReference type="EMDB" id="EMD-39455"/>
<dbReference type="EMDB" id="EMD-39456"/>
<dbReference type="EMDB" id="EMD-40205"/>
<dbReference type="EMDB" id="EMD-4070"/>
<dbReference type="EMDB" id="EMD-42351"/>
<dbReference type="EMDB" id="EMD-45170"/>
<dbReference type="EMDB" id="EMD-50641"/>
<dbReference type="EMDB" id="EMD-51132"/>
<dbReference type="EMDB" id="EMD-51452"/>
<dbReference type="EMDB" id="EMD-9701"/>
<dbReference type="EMDB" id="EMD-9702"/>
<dbReference type="EMDB" id="EMD-9703"/>
<dbReference type="SMR" id="P61254"/>
<dbReference type="BioGRID" id="112073">
    <property type="interactions" value="537"/>
</dbReference>
<dbReference type="ComplexPortal" id="CPX-5183">
    <property type="entry name" value="60S cytosolic large ribosomal subunit"/>
</dbReference>
<dbReference type="ComplexPortal" id="CPX-7664">
    <property type="entry name" value="60S cytosolic large ribosomal subunit, testis-specific variant"/>
</dbReference>
<dbReference type="ComplexPortal" id="CPX-7665">
    <property type="entry name" value="60S cytosolic large ribosomal subunit, striated muscle variant"/>
</dbReference>
<dbReference type="CORUM" id="P61254"/>
<dbReference type="DIP" id="DIP-33198N"/>
<dbReference type="FunCoup" id="P61254">
    <property type="interactions" value="2313"/>
</dbReference>
<dbReference type="IntAct" id="P61254">
    <property type="interactions" value="92"/>
</dbReference>
<dbReference type="MINT" id="P61254"/>
<dbReference type="STRING" id="9606.ENSP00000463784"/>
<dbReference type="MoonProt" id="P61254"/>
<dbReference type="GlyGen" id="P61254">
    <property type="glycosylation" value="2 sites, 1 N-linked glycan (1 site), 1 O-linked glycan (1 site)"/>
</dbReference>
<dbReference type="iPTMnet" id="P61254"/>
<dbReference type="MetOSite" id="P61254"/>
<dbReference type="PhosphoSitePlus" id="P61254"/>
<dbReference type="SwissPalm" id="P61254"/>
<dbReference type="BioMuta" id="RPL26"/>
<dbReference type="DMDM" id="47117765"/>
<dbReference type="jPOST" id="P61254"/>
<dbReference type="MassIVE" id="P61254"/>
<dbReference type="PaxDb" id="9606-ENSP00000463784"/>
<dbReference type="PeptideAtlas" id="P61254"/>
<dbReference type="ProteomicsDB" id="57287"/>
<dbReference type="Pumba" id="P61254"/>
<dbReference type="TopDownProteomics" id="P61254"/>
<dbReference type="Antibodypedia" id="24664">
    <property type="antibodies" value="173 antibodies from 24 providers"/>
</dbReference>
<dbReference type="DNASU" id="6154"/>
<dbReference type="Ensembl" id="ENST00000582556.5">
    <property type="protein sequence ID" value="ENSP00000463470.1"/>
    <property type="gene ID" value="ENSG00000161970.15"/>
</dbReference>
<dbReference type="Ensembl" id="ENST00000583011.6">
    <property type="protein sequence ID" value="ENSP00000462322.1"/>
    <property type="gene ID" value="ENSG00000161970.15"/>
</dbReference>
<dbReference type="Ensembl" id="ENST00000584164.6">
    <property type="protein sequence ID" value="ENSP00000463784.1"/>
    <property type="gene ID" value="ENSG00000161970.15"/>
</dbReference>
<dbReference type="Ensembl" id="ENST00000648839.1">
    <property type="protein sequence ID" value="ENSP00000498177.1"/>
    <property type="gene ID" value="ENSG00000161970.15"/>
</dbReference>
<dbReference type="GeneID" id="6154"/>
<dbReference type="KEGG" id="hsa:6154"/>
<dbReference type="MANE-Select" id="ENST00000648839.1">
    <property type="protein sequence ID" value="ENSP00000498177.1"/>
    <property type="RefSeq nucleotide sequence ID" value="NM_000987.5"/>
    <property type="RefSeq protein sequence ID" value="NP_000978.1"/>
</dbReference>
<dbReference type="UCSC" id="uc002glh.2">
    <property type="organism name" value="human"/>
</dbReference>
<dbReference type="AGR" id="HGNC:10327"/>
<dbReference type="CTD" id="6154"/>
<dbReference type="DisGeNET" id="6154"/>
<dbReference type="GeneCards" id="RPL26"/>
<dbReference type="GeneReviews" id="RPL26"/>
<dbReference type="HGNC" id="HGNC:10327">
    <property type="gene designation" value="RPL26"/>
</dbReference>
<dbReference type="HPA" id="ENSG00000161970">
    <property type="expression patterns" value="Low tissue specificity"/>
</dbReference>
<dbReference type="MalaCards" id="RPL26"/>
<dbReference type="MIM" id="603704">
    <property type="type" value="gene"/>
</dbReference>
<dbReference type="MIM" id="614900">
    <property type="type" value="phenotype"/>
</dbReference>
<dbReference type="neXtProt" id="NX_P61254"/>
<dbReference type="OpenTargets" id="ENSG00000161970"/>
<dbReference type="Orphanet" id="124">
    <property type="disease" value="Diamond-Blackfan anemia"/>
</dbReference>
<dbReference type="PharmGKB" id="PA34705"/>
<dbReference type="VEuPathDB" id="HostDB:ENSG00000161970"/>
<dbReference type="eggNOG" id="KOG3401">
    <property type="taxonomic scope" value="Eukaryota"/>
</dbReference>
<dbReference type="GeneTree" id="ENSGT00390000014165"/>
<dbReference type="HOGENOM" id="CLU_093240_0_0_1"/>
<dbReference type="InParanoid" id="P61254"/>
<dbReference type="OMA" id="KILERRX"/>
<dbReference type="OrthoDB" id="9529388at2759"/>
<dbReference type="PAN-GO" id="P61254">
    <property type="GO annotations" value="5 GO annotations based on evolutionary models"/>
</dbReference>
<dbReference type="PhylomeDB" id="P61254"/>
<dbReference type="TreeFam" id="TF300236"/>
<dbReference type="PathwayCommons" id="P61254"/>
<dbReference type="Reactome" id="R-HSA-156827">
    <property type="pathway name" value="L13a-mediated translational silencing of Ceruloplasmin expression"/>
</dbReference>
<dbReference type="Reactome" id="R-HSA-156902">
    <property type="pathway name" value="Peptide chain elongation"/>
</dbReference>
<dbReference type="Reactome" id="R-HSA-1799339">
    <property type="pathway name" value="SRP-dependent cotranslational protein targeting to membrane"/>
</dbReference>
<dbReference type="Reactome" id="R-HSA-192823">
    <property type="pathway name" value="Viral mRNA Translation"/>
</dbReference>
<dbReference type="Reactome" id="R-HSA-2408557">
    <property type="pathway name" value="Selenocysteine synthesis"/>
</dbReference>
<dbReference type="Reactome" id="R-HSA-6791226">
    <property type="pathway name" value="Major pathway of rRNA processing in the nucleolus and cytosol"/>
</dbReference>
<dbReference type="Reactome" id="R-HSA-72689">
    <property type="pathway name" value="Formation of a pool of free 40S subunits"/>
</dbReference>
<dbReference type="Reactome" id="R-HSA-72706">
    <property type="pathway name" value="GTP hydrolysis and joining of the 60S ribosomal subunit"/>
</dbReference>
<dbReference type="Reactome" id="R-HSA-72764">
    <property type="pathway name" value="Eukaryotic Translation Termination"/>
</dbReference>
<dbReference type="Reactome" id="R-HSA-9010553">
    <property type="pathway name" value="Regulation of expression of SLITs and ROBOs"/>
</dbReference>
<dbReference type="Reactome" id="R-HSA-9633012">
    <property type="pathway name" value="Response of EIF2AK4 (GCN2) to amino acid deficiency"/>
</dbReference>
<dbReference type="Reactome" id="R-HSA-975956">
    <property type="pathway name" value="Nonsense Mediated Decay (NMD) independent of the Exon Junction Complex (EJC)"/>
</dbReference>
<dbReference type="Reactome" id="R-HSA-975957">
    <property type="pathway name" value="Nonsense Mediated Decay (NMD) enhanced by the Exon Junction Complex (EJC)"/>
</dbReference>
<dbReference type="SignaLink" id="P61254"/>
<dbReference type="SIGNOR" id="P61254"/>
<dbReference type="BioGRID-ORCS" id="6154">
    <property type="hits" value="788 hits in 1065 CRISPR screens"/>
</dbReference>
<dbReference type="CD-CODE" id="232F8A39">
    <property type="entry name" value="P-body"/>
</dbReference>
<dbReference type="CD-CODE" id="91857CE7">
    <property type="entry name" value="Nucleolus"/>
</dbReference>
<dbReference type="CD-CODE" id="D02F3EC8">
    <property type="entry name" value="Peri-nucleolar condensate"/>
</dbReference>
<dbReference type="ChiTaRS" id="RPL26">
    <property type="organism name" value="human"/>
</dbReference>
<dbReference type="GeneWiki" id="RPL26"/>
<dbReference type="GenomeRNAi" id="6154"/>
<dbReference type="Pharos" id="P61254">
    <property type="development level" value="Tbio"/>
</dbReference>
<dbReference type="PRO" id="PR:P61254"/>
<dbReference type="Proteomes" id="UP000005640">
    <property type="component" value="Chromosome 17"/>
</dbReference>
<dbReference type="RNAct" id="P61254">
    <property type="molecule type" value="protein"/>
</dbReference>
<dbReference type="Bgee" id="ENSG00000161970">
    <property type="expression patterns" value="Expressed in cortical plate and 100 other cell types or tissues"/>
</dbReference>
<dbReference type="ExpressionAtlas" id="P61254">
    <property type="expression patterns" value="baseline and differential"/>
</dbReference>
<dbReference type="GO" id="GO:0005737">
    <property type="term" value="C:cytoplasm"/>
    <property type="evidence" value="ECO:0000314"/>
    <property type="project" value="CAFA"/>
</dbReference>
<dbReference type="GO" id="GO:0005829">
    <property type="term" value="C:cytosol"/>
    <property type="evidence" value="ECO:0000304"/>
    <property type="project" value="Reactome"/>
</dbReference>
<dbReference type="GO" id="GO:0022625">
    <property type="term" value="C:cytosolic large ribosomal subunit"/>
    <property type="evidence" value="ECO:0000314"/>
    <property type="project" value="UniProtKB"/>
</dbReference>
<dbReference type="GO" id="GO:0022626">
    <property type="term" value="C:cytosolic ribosome"/>
    <property type="evidence" value="ECO:0000314"/>
    <property type="project" value="CAFA"/>
</dbReference>
<dbReference type="GO" id="GO:0070062">
    <property type="term" value="C:extracellular exosome"/>
    <property type="evidence" value="ECO:0007005"/>
    <property type="project" value="UniProtKB"/>
</dbReference>
<dbReference type="GO" id="GO:0016020">
    <property type="term" value="C:membrane"/>
    <property type="evidence" value="ECO:0007005"/>
    <property type="project" value="UniProtKB"/>
</dbReference>
<dbReference type="GO" id="GO:0005730">
    <property type="term" value="C:nucleolus"/>
    <property type="evidence" value="ECO:0000314"/>
    <property type="project" value="CAFA"/>
</dbReference>
<dbReference type="GO" id="GO:0005654">
    <property type="term" value="C:nucleoplasm"/>
    <property type="evidence" value="ECO:0000314"/>
    <property type="project" value="CAFA"/>
</dbReference>
<dbReference type="GO" id="GO:1990904">
    <property type="term" value="C:ribonucleoprotein complex"/>
    <property type="evidence" value="ECO:0000315"/>
    <property type="project" value="CAFA"/>
</dbReference>
<dbReference type="GO" id="GO:0048027">
    <property type="term" value="F:mRNA 5'-UTR binding"/>
    <property type="evidence" value="ECO:0000315"/>
    <property type="project" value="CAFA"/>
</dbReference>
<dbReference type="GO" id="GO:0003723">
    <property type="term" value="F:RNA binding"/>
    <property type="evidence" value="ECO:0007005"/>
    <property type="project" value="UniProtKB"/>
</dbReference>
<dbReference type="GO" id="GO:0003735">
    <property type="term" value="F:structural constituent of ribosome"/>
    <property type="evidence" value="ECO:0000314"/>
    <property type="project" value="UniProtKB"/>
</dbReference>
<dbReference type="GO" id="GO:0071480">
    <property type="term" value="P:cellular response to gamma radiation"/>
    <property type="evidence" value="ECO:0000314"/>
    <property type="project" value="CAFA"/>
</dbReference>
<dbReference type="GO" id="GO:0034644">
    <property type="term" value="P:cellular response to UV"/>
    <property type="evidence" value="ECO:0000315"/>
    <property type="project" value="CAFA"/>
</dbReference>
<dbReference type="GO" id="GO:0002181">
    <property type="term" value="P:cytoplasmic translation"/>
    <property type="evidence" value="ECO:0000318"/>
    <property type="project" value="GO_Central"/>
</dbReference>
<dbReference type="GO" id="GO:0030330">
    <property type="term" value="P:DNA damage response, signal transduction by p53 class mediator"/>
    <property type="evidence" value="ECO:0000315"/>
    <property type="project" value="CAFA"/>
</dbReference>
<dbReference type="GO" id="GO:0043517">
    <property type="term" value="P:positive regulation of DNA damage response, signal transduction by p53 class mediator"/>
    <property type="evidence" value="ECO:0000315"/>
    <property type="project" value="CAFA"/>
</dbReference>
<dbReference type="GO" id="GO:1902167">
    <property type="term" value="P:positive regulation of intrinsic apoptotic signaling pathway in response to DNA damage by p53 class mediator"/>
    <property type="evidence" value="ECO:0000315"/>
    <property type="project" value="CAFA"/>
</dbReference>
<dbReference type="GO" id="GO:0045727">
    <property type="term" value="P:positive regulation of translation"/>
    <property type="evidence" value="ECO:0000315"/>
    <property type="project" value="CAFA"/>
</dbReference>
<dbReference type="GO" id="GO:1904803">
    <property type="term" value="P:regulation of translation involved in cellular response to UV"/>
    <property type="evidence" value="ECO:0000315"/>
    <property type="project" value="CAFA"/>
</dbReference>
<dbReference type="GO" id="GO:0042273">
    <property type="term" value="P:ribosomal large subunit biogenesis"/>
    <property type="evidence" value="ECO:0000315"/>
    <property type="project" value="UniProtKB"/>
</dbReference>
<dbReference type="GO" id="GO:0006364">
    <property type="term" value="P:rRNA processing"/>
    <property type="evidence" value="ECO:0000315"/>
    <property type="project" value="UniProtKB"/>
</dbReference>
<dbReference type="GO" id="GO:0006412">
    <property type="term" value="P:translation"/>
    <property type="evidence" value="ECO:0000304"/>
    <property type="project" value="ProtInc"/>
</dbReference>
<dbReference type="CDD" id="cd06089">
    <property type="entry name" value="KOW_RPL26"/>
    <property type="match status" value="1"/>
</dbReference>
<dbReference type="FunFam" id="2.30.30.30:FF:000009">
    <property type="entry name" value="60S ribosomal protein L26"/>
    <property type="match status" value="1"/>
</dbReference>
<dbReference type="Gene3D" id="2.30.30.30">
    <property type="match status" value="1"/>
</dbReference>
<dbReference type="HAMAP" id="MF_01326_A">
    <property type="entry name" value="Ribosomal_uL24_A"/>
    <property type="match status" value="1"/>
</dbReference>
<dbReference type="InterPro" id="IPR005824">
    <property type="entry name" value="KOW"/>
</dbReference>
<dbReference type="InterPro" id="IPR014722">
    <property type="entry name" value="Rib_uL2_dom2"/>
</dbReference>
<dbReference type="InterPro" id="IPR005825">
    <property type="entry name" value="Ribosomal_uL24_CS"/>
</dbReference>
<dbReference type="InterPro" id="IPR005756">
    <property type="entry name" value="Ribosomal_uL24_euk/arc"/>
</dbReference>
<dbReference type="InterPro" id="IPR041988">
    <property type="entry name" value="Ribosomal_uL24_KOW"/>
</dbReference>
<dbReference type="InterPro" id="IPR008991">
    <property type="entry name" value="Translation_prot_SH3-like_sf"/>
</dbReference>
<dbReference type="NCBIfam" id="TIGR01080">
    <property type="entry name" value="rplX_A_E"/>
    <property type="match status" value="1"/>
</dbReference>
<dbReference type="PANTHER" id="PTHR11143">
    <property type="entry name" value="60S RIBOSOMAL PROTEIN L26 FAMILY MEMBER"/>
    <property type="match status" value="1"/>
</dbReference>
<dbReference type="Pfam" id="PF00467">
    <property type="entry name" value="KOW"/>
    <property type="match status" value="1"/>
</dbReference>
<dbReference type="Pfam" id="PF16906">
    <property type="entry name" value="Ribosomal_L26"/>
    <property type="match status" value="1"/>
</dbReference>
<dbReference type="SMART" id="SM00739">
    <property type="entry name" value="KOW"/>
    <property type="match status" value="1"/>
</dbReference>
<dbReference type="SUPFAM" id="SSF50104">
    <property type="entry name" value="Translation proteins SH3-like domain"/>
    <property type="match status" value="1"/>
</dbReference>
<dbReference type="PROSITE" id="PS01108">
    <property type="entry name" value="RIBOSOMAL_L24"/>
    <property type="match status" value="1"/>
</dbReference>
<sequence length="145" mass="17258">MKFNPFVTSDRSKNRKRHFNAPSHIRRKIMSSPLSKELRQKYNVRSMPIRKDDEVQVVRGHYKGQQIGKVVQVYRKKYVIYIERVQREKANGTTVHVGIHPSKVVITRLKLDKDRKKILERKAKSRQVGKEKGKYKEETIEKMQE</sequence>
<proteinExistence type="evidence at protein level"/>